<name>RL6_CARHZ</name>
<sequence>MSRIGRKPIPVPQGVEVKVEGTTVTVKGPKGSLTREFHPDMKITFDGSQILVERPSDEKEHKALHGLTRTLINNMIVGVTNGYQKSLELVGVGYRAAKQGRKLVLTVGYSHPVEMDPPEGIEIEVPAQNQIIVKGIDKELVGNFAATIRAVREPEPYKGKGIKYTDEVIRRKAGKTGGKGKK</sequence>
<comment type="function">
    <text evidence="1">This protein binds to the 23S rRNA, and is important in its secondary structure. It is located near the subunit interface in the base of the L7/L12 stalk, and near the tRNA binding site of the peptidyltransferase center.</text>
</comment>
<comment type="subunit">
    <text evidence="1">Part of the 50S ribosomal subunit.</text>
</comment>
<comment type="similarity">
    <text evidence="1">Belongs to the universal ribosomal protein uL6 family.</text>
</comment>
<reference key="1">
    <citation type="journal article" date="2005" name="PLoS Genet.">
        <title>Life in hot carbon monoxide: the complete genome sequence of Carboxydothermus hydrogenoformans Z-2901.</title>
        <authorList>
            <person name="Wu M."/>
            <person name="Ren Q."/>
            <person name="Durkin A.S."/>
            <person name="Daugherty S.C."/>
            <person name="Brinkac L.M."/>
            <person name="Dodson R.J."/>
            <person name="Madupu R."/>
            <person name="Sullivan S.A."/>
            <person name="Kolonay J.F."/>
            <person name="Nelson W.C."/>
            <person name="Tallon L.J."/>
            <person name="Jones K.M."/>
            <person name="Ulrich L.E."/>
            <person name="Gonzalez J.M."/>
            <person name="Zhulin I.B."/>
            <person name="Robb F.T."/>
            <person name="Eisen J.A."/>
        </authorList>
    </citation>
    <scope>NUCLEOTIDE SEQUENCE [LARGE SCALE GENOMIC DNA]</scope>
    <source>
        <strain>ATCC BAA-161 / DSM 6008 / Z-2901</strain>
    </source>
</reference>
<gene>
    <name evidence="1" type="primary">rplF</name>
    <name type="ordered locus">CHY_2294</name>
</gene>
<organism>
    <name type="scientific">Carboxydothermus hydrogenoformans (strain ATCC BAA-161 / DSM 6008 / Z-2901)</name>
    <dbReference type="NCBI Taxonomy" id="246194"/>
    <lineage>
        <taxon>Bacteria</taxon>
        <taxon>Bacillati</taxon>
        <taxon>Bacillota</taxon>
        <taxon>Clostridia</taxon>
        <taxon>Thermoanaerobacterales</taxon>
        <taxon>Thermoanaerobacteraceae</taxon>
        <taxon>Carboxydothermus</taxon>
    </lineage>
</organism>
<keyword id="KW-1185">Reference proteome</keyword>
<keyword id="KW-0687">Ribonucleoprotein</keyword>
<keyword id="KW-0689">Ribosomal protein</keyword>
<keyword id="KW-0694">RNA-binding</keyword>
<keyword id="KW-0699">rRNA-binding</keyword>
<feature type="chain" id="PRO_0000260846" description="Large ribosomal subunit protein uL6">
    <location>
        <begin position="1"/>
        <end position="182"/>
    </location>
</feature>
<protein>
    <recommendedName>
        <fullName evidence="1">Large ribosomal subunit protein uL6</fullName>
    </recommendedName>
    <alternativeName>
        <fullName evidence="2">50S ribosomal protein L6</fullName>
    </alternativeName>
</protein>
<dbReference type="EMBL" id="CP000141">
    <property type="protein sequence ID" value="ABB13753.1"/>
    <property type="molecule type" value="Genomic_DNA"/>
</dbReference>
<dbReference type="RefSeq" id="WP_011345176.1">
    <property type="nucleotide sequence ID" value="NC_007503.1"/>
</dbReference>
<dbReference type="SMR" id="Q3A9T1"/>
<dbReference type="FunCoup" id="Q3A9T1">
    <property type="interactions" value="449"/>
</dbReference>
<dbReference type="STRING" id="246194.CHY_2294"/>
<dbReference type="KEGG" id="chy:CHY_2294"/>
<dbReference type="eggNOG" id="COG0097">
    <property type="taxonomic scope" value="Bacteria"/>
</dbReference>
<dbReference type="HOGENOM" id="CLU_065464_1_2_9"/>
<dbReference type="InParanoid" id="Q3A9T1"/>
<dbReference type="OrthoDB" id="9805007at2"/>
<dbReference type="Proteomes" id="UP000002706">
    <property type="component" value="Chromosome"/>
</dbReference>
<dbReference type="GO" id="GO:0022625">
    <property type="term" value="C:cytosolic large ribosomal subunit"/>
    <property type="evidence" value="ECO:0007669"/>
    <property type="project" value="TreeGrafter"/>
</dbReference>
<dbReference type="GO" id="GO:0019843">
    <property type="term" value="F:rRNA binding"/>
    <property type="evidence" value="ECO:0007669"/>
    <property type="project" value="UniProtKB-UniRule"/>
</dbReference>
<dbReference type="GO" id="GO:0003735">
    <property type="term" value="F:structural constituent of ribosome"/>
    <property type="evidence" value="ECO:0007669"/>
    <property type="project" value="InterPro"/>
</dbReference>
<dbReference type="GO" id="GO:0002181">
    <property type="term" value="P:cytoplasmic translation"/>
    <property type="evidence" value="ECO:0007669"/>
    <property type="project" value="TreeGrafter"/>
</dbReference>
<dbReference type="FunFam" id="3.90.930.12:FF:000001">
    <property type="entry name" value="50S ribosomal protein L6"/>
    <property type="match status" value="1"/>
</dbReference>
<dbReference type="FunFam" id="3.90.930.12:FF:000002">
    <property type="entry name" value="50S ribosomal protein L6"/>
    <property type="match status" value="1"/>
</dbReference>
<dbReference type="Gene3D" id="3.90.930.12">
    <property type="entry name" value="Ribosomal protein L6, alpha-beta domain"/>
    <property type="match status" value="2"/>
</dbReference>
<dbReference type="HAMAP" id="MF_01365_B">
    <property type="entry name" value="Ribosomal_uL6_B"/>
    <property type="match status" value="1"/>
</dbReference>
<dbReference type="InterPro" id="IPR000702">
    <property type="entry name" value="Ribosomal_uL6-like"/>
</dbReference>
<dbReference type="InterPro" id="IPR036789">
    <property type="entry name" value="Ribosomal_uL6-like_a/b-dom_sf"/>
</dbReference>
<dbReference type="InterPro" id="IPR020040">
    <property type="entry name" value="Ribosomal_uL6_a/b-dom"/>
</dbReference>
<dbReference type="InterPro" id="IPR019906">
    <property type="entry name" value="Ribosomal_uL6_bac-type"/>
</dbReference>
<dbReference type="InterPro" id="IPR002358">
    <property type="entry name" value="Ribosomal_uL6_CS"/>
</dbReference>
<dbReference type="NCBIfam" id="TIGR03654">
    <property type="entry name" value="L6_bact"/>
    <property type="match status" value="1"/>
</dbReference>
<dbReference type="PANTHER" id="PTHR11655">
    <property type="entry name" value="60S/50S RIBOSOMAL PROTEIN L6/L9"/>
    <property type="match status" value="1"/>
</dbReference>
<dbReference type="PANTHER" id="PTHR11655:SF14">
    <property type="entry name" value="LARGE RIBOSOMAL SUBUNIT PROTEIN UL6M"/>
    <property type="match status" value="1"/>
</dbReference>
<dbReference type="Pfam" id="PF00347">
    <property type="entry name" value="Ribosomal_L6"/>
    <property type="match status" value="2"/>
</dbReference>
<dbReference type="PIRSF" id="PIRSF002162">
    <property type="entry name" value="Ribosomal_L6"/>
    <property type="match status" value="1"/>
</dbReference>
<dbReference type="PRINTS" id="PR00059">
    <property type="entry name" value="RIBOSOMALL6"/>
</dbReference>
<dbReference type="SUPFAM" id="SSF56053">
    <property type="entry name" value="Ribosomal protein L6"/>
    <property type="match status" value="2"/>
</dbReference>
<dbReference type="PROSITE" id="PS00525">
    <property type="entry name" value="RIBOSOMAL_L6_1"/>
    <property type="match status" value="1"/>
</dbReference>
<proteinExistence type="inferred from homology"/>
<evidence type="ECO:0000255" key="1">
    <source>
        <dbReference type="HAMAP-Rule" id="MF_01365"/>
    </source>
</evidence>
<evidence type="ECO:0000305" key="2"/>
<accession>Q3A9T1</accession>